<comment type="function">
    <text evidence="2">Involved in the degradation of arabinan and is a key enzyme in the complete degradation of the plant cell wall. Catalyzes the cleavage of terminal alpha-(1-&gt;5)-arabinofuranosyl bonds in small oligosaccharides as alpha-(1-&gt;5)-linked arabinobiose/arabinotriose, but does not display significant activity against linear non-substituted arabinan. It is also highly efficient in the cleavage of alpha-(1-&gt;3)-linked arabinoside of xylobiose and of the alpha-(1-&gt;3)-linked arabinoside decorations of polymeric wheat arabinoxylan. It exhibits very low activity against sugar beet arabinan.</text>
</comment>
<comment type="catalytic activity">
    <reaction evidence="2">
        <text>Hydrolysis of terminal non-reducing alpha-L-arabinofuranoside residues in alpha-L-arabinosides.</text>
        <dbReference type="EC" id="3.2.1.55"/>
    </reaction>
</comment>
<comment type="biophysicochemical properties">
    <kinetics>
        <KM evidence="2">5.5 uM for wheat arabinoxylan (at 37 degrees Celsius and at pH 7)</KM>
        <KM evidence="2">0.25 mM for p-nitrophenyl alpha-L-arabinofuranoside (pNP-Araf)(at 37 degrees Celsius and at pH 7)</KM>
        <KM evidence="2">0.55 mM for alpha-(1-&gt;5)-linked arabinotriose (at 37 degrees Celsius and at pH 7)</KM>
        <KM evidence="2">0.95 mM for alpha-(1-&gt;3)-linked arabinoside of xylobiose (at 37 degrees Celsius and at pH 7)</KM>
    </kinetics>
    <phDependence>
        <text evidence="2">Optimum pH is 6.0.</text>
    </phDependence>
    <temperatureDependence>
        <text evidence="2">Optimum temperature is 60 degrees Celsius.</text>
    </temperatureDependence>
</comment>
<comment type="pathway">
    <text>Glycan metabolism; L-arabinan degradation.</text>
</comment>
<comment type="subunit">
    <text evidence="2">Homohexamer; trimer of dimers.</text>
</comment>
<comment type="subcellular location">
    <subcellularLocation>
        <location evidence="6">Cytoplasm</location>
    </subcellularLocation>
</comment>
<comment type="similarity">
    <text evidence="5">Belongs to the glycosyl hydrolase 51 family.</text>
</comment>
<protein>
    <recommendedName>
        <fullName>Intracellular exo-alpha-(1-&gt;5)-L-arabinofuranosidase</fullName>
        <shortName>ABF</shortName>
        <ecNumber evidence="2">3.2.1.55</ecNumber>
    </recommendedName>
    <alternativeName>
        <fullName evidence="4">Araf51</fullName>
    </alternativeName>
    <alternativeName>
        <fullName>Intracellular arabinan exo-alpha-(1-&gt;5)-L-arabinosidase</fullName>
        <shortName>Arabinosidase</shortName>
    </alternativeName>
</protein>
<evidence type="ECO:0000250" key="1">
    <source>
        <dbReference type="UniProtKB" id="Q9XBQ3"/>
    </source>
</evidence>
<evidence type="ECO:0000269" key="2">
    <source>
    </source>
</evidence>
<evidence type="ECO:0000269" key="3">
    <source ref="3"/>
</evidence>
<evidence type="ECO:0000303" key="4">
    <source>
    </source>
</evidence>
<evidence type="ECO:0000305" key="5"/>
<evidence type="ECO:0000305" key="6">
    <source>
    </source>
</evidence>
<evidence type="ECO:0007744" key="7">
    <source>
        <dbReference type="PDB" id="2C7F"/>
    </source>
</evidence>
<evidence type="ECO:0007744" key="8">
    <source>
        <dbReference type="PDB" id="2C8N"/>
    </source>
</evidence>
<evidence type="ECO:0007744" key="9">
    <source>
        <dbReference type="PDB" id="5O7Z"/>
    </source>
</evidence>
<evidence type="ECO:0007744" key="10">
    <source>
        <dbReference type="PDB" id="5O80"/>
    </source>
</evidence>
<evidence type="ECO:0007744" key="11">
    <source>
        <dbReference type="PDB" id="5O81"/>
    </source>
</evidence>
<evidence type="ECO:0007744" key="12">
    <source>
        <dbReference type="PDB" id="5O82"/>
    </source>
</evidence>
<evidence type="ECO:0007829" key="13">
    <source>
        <dbReference type="PDB" id="2C8N"/>
    </source>
</evidence>
<evidence type="ECO:0007829" key="14">
    <source>
        <dbReference type="PDB" id="5O7Z"/>
    </source>
</evidence>
<evidence type="ECO:0007829" key="15">
    <source>
        <dbReference type="PDB" id="5O80"/>
    </source>
</evidence>
<evidence type="ECO:0007829" key="16">
    <source>
        <dbReference type="PDB" id="5O81"/>
    </source>
</evidence>
<evidence type="ECO:0007829" key="17">
    <source>
        <dbReference type="PDB" id="5O82"/>
    </source>
</evidence>
<proteinExistence type="evidence at protein level"/>
<reference key="1">
    <citation type="submission" date="2007-02" db="EMBL/GenBank/DDBJ databases">
        <title>Complete sequence of Clostridium thermocellum ATCC 27405.</title>
        <authorList>
            <consortium name="US DOE Joint Genome Institute"/>
            <person name="Copeland A."/>
            <person name="Lucas S."/>
            <person name="Lapidus A."/>
            <person name="Barry K."/>
            <person name="Detter J.C."/>
            <person name="Glavina del Rio T."/>
            <person name="Hammon N."/>
            <person name="Israni S."/>
            <person name="Dalin E."/>
            <person name="Tice H."/>
            <person name="Pitluck S."/>
            <person name="Chertkov O."/>
            <person name="Brettin T."/>
            <person name="Bruce D."/>
            <person name="Han C."/>
            <person name="Tapia R."/>
            <person name="Gilna P."/>
            <person name="Schmutz J."/>
            <person name="Larimer F."/>
            <person name="Land M."/>
            <person name="Hauser L."/>
            <person name="Kyrpides N."/>
            <person name="Mikhailova N."/>
            <person name="Wu J.H.D."/>
            <person name="Newcomb M."/>
            <person name="Richardson P."/>
        </authorList>
    </citation>
    <scope>NUCLEOTIDE SEQUENCE [LARGE SCALE GENOMIC DNA]</scope>
    <source>
        <strain>ATCC 27405 / DSM 1237 / JCM 9322 / NBRC 103400 / NCIMB 10682 / NRRL B-4536 / VPI 7372</strain>
    </source>
</reference>
<reference evidence="7 8" key="2">
    <citation type="journal article" date="2006" name="Biochem. J.">
        <title>Structural insight into the ligand specificity of a thermostable family 51 arabinofuranosidase, Araf51, from Clostridium thermocellum.</title>
        <authorList>
            <person name="Taylor E.J."/>
            <person name="Smith N.L."/>
            <person name="Turkenburg J.P."/>
            <person name="D'Souza S."/>
            <person name="Gilbert H.J."/>
            <person name="Davies G.J."/>
        </authorList>
    </citation>
    <scope>X-RAY CRYSTALLOGRAPHY (2.70 ANGSTROMS) IN COMPLEX WITH SUBSTRATE ANALOGS</scope>
    <scope>FUNCTION</scope>
    <scope>CATALYTIC ACTIVITY</scope>
    <scope>MUTAGENESIS OF GLU-173</scope>
    <scope>ACTIVE SITE</scope>
    <scope>BIOPHYSICOCHEMICAL PROPERTIES</scope>
    <scope>SUBSTRATE SPECIFICITY</scope>
    <scope>SUBCELLULAR LOCATION</scope>
    <scope>SUBUNIT</scope>
</reference>
<reference evidence="9 10 11 12" key="3">
    <citation type="submission" date="2017-06" db="PDB data bank">
        <authorList>
            <person name="Pennec A."/>
            <person name="Lafite P."/>
            <person name="Ferrieres V."/>
            <person name="Daniellou R."/>
        </authorList>
    </citation>
    <scope>X-RAY CRYSTALLOGRAPHY (2.39 ANGSTROMS) OF 2-502 IN COMPLEX WITH ALPHA-L-ARABINOFURANOSE</scope>
</reference>
<feature type="chain" id="PRO_0000422128" description="Intracellular exo-alpha-(1-&gt;5)-L-arabinofuranosidase">
    <location>
        <begin position="1"/>
        <end position="503"/>
    </location>
</feature>
<feature type="active site" description="Proton donor/acceptor" evidence="6">
    <location>
        <position position="173"/>
    </location>
</feature>
<feature type="active site" description="Nucleophile" evidence="2">
    <location>
        <position position="292"/>
    </location>
</feature>
<feature type="binding site" evidence="3 6 7 8 10 12">
    <location>
        <position position="27"/>
    </location>
    <ligand>
        <name>alpha-L-arabinofuranose</name>
        <dbReference type="ChEBI" id="CHEBI:28772"/>
    </ligand>
</feature>
<feature type="binding site" evidence="3 6 7 8 10 12">
    <location>
        <position position="72"/>
    </location>
    <ligand>
        <name>alpha-L-arabinofuranose</name>
        <dbReference type="ChEBI" id="CHEBI:28772"/>
    </ligand>
</feature>
<feature type="binding site" evidence="3 6 7 12">
    <location>
        <position position="172"/>
    </location>
    <ligand>
        <name>alpha-L-arabinofuranose</name>
        <dbReference type="ChEBI" id="CHEBI:28772"/>
    </ligand>
</feature>
<feature type="binding site" evidence="3 6 7 8 10 12">
    <location>
        <position position="244"/>
    </location>
    <ligand>
        <name>alpha-L-arabinofuranose</name>
        <dbReference type="ChEBI" id="CHEBI:28772"/>
    </ligand>
</feature>
<feature type="binding site" evidence="3 6 7 8 10 12">
    <location>
        <position position="292"/>
    </location>
    <ligand>
        <name>alpha-L-arabinofuranose</name>
        <dbReference type="ChEBI" id="CHEBI:28772"/>
    </ligand>
</feature>
<feature type="binding site" evidence="3 6 8 10">
    <location>
        <position position="352"/>
    </location>
    <ligand>
        <name>alpha-L-arabinofuranose</name>
        <dbReference type="ChEBI" id="CHEBI:28772"/>
    </ligand>
</feature>
<feature type="site" description="Important for substrate recognition" evidence="1">
    <location>
        <position position="296"/>
    </location>
</feature>
<feature type="site" description="Important for substrate recognition" evidence="1">
    <location>
        <position position="352"/>
    </location>
</feature>
<feature type="mutagenesis site" description="Absence of arabinofuranosidase activity." evidence="2">
    <original>E</original>
    <variation>A</variation>
    <location>
        <position position="173"/>
    </location>
</feature>
<feature type="strand" evidence="17">
    <location>
        <begin position="3"/>
        <end position="8"/>
    </location>
</feature>
<feature type="strand" evidence="17">
    <location>
        <begin position="12"/>
        <end position="16"/>
    </location>
</feature>
<feature type="helix" evidence="17">
    <location>
        <begin position="19"/>
        <end position="22"/>
    </location>
</feature>
<feature type="strand" evidence="17">
    <location>
        <begin position="23"/>
        <end position="25"/>
    </location>
</feature>
<feature type="turn" evidence="17">
    <location>
        <begin position="35"/>
        <end position="37"/>
    </location>
</feature>
<feature type="strand" evidence="14">
    <location>
        <begin position="40"/>
        <end position="42"/>
    </location>
</feature>
<feature type="strand" evidence="17">
    <location>
        <begin position="49"/>
        <end position="51"/>
    </location>
</feature>
<feature type="helix" evidence="17">
    <location>
        <begin position="52"/>
        <end position="60"/>
    </location>
</feature>
<feature type="strand" evidence="17">
    <location>
        <begin position="65"/>
        <end position="69"/>
    </location>
</feature>
<feature type="helix" evidence="17">
    <location>
        <begin position="72"/>
        <end position="76"/>
    </location>
</feature>
<feature type="helix" evidence="17">
    <location>
        <begin position="79"/>
        <end position="82"/>
    </location>
</feature>
<feature type="helix" evidence="17">
    <location>
        <begin position="86"/>
        <end position="88"/>
    </location>
</feature>
<feature type="strand" evidence="17">
    <location>
        <begin position="92"/>
        <end position="94"/>
    </location>
</feature>
<feature type="turn" evidence="17">
    <location>
        <begin position="95"/>
        <end position="98"/>
    </location>
</feature>
<feature type="strand" evidence="17">
    <location>
        <begin position="99"/>
        <end position="101"/>
    </location>
</feature>
<feature type="helix" evidence="17">
    <location>
        <begin position="107"/>
        <end position="116"/>
    </location>
</feature>
<feature type="strand" evidence="17">
    <location>
        <begin position="120"/>
        <end position="124"/>
    </location>
</feature>
<feature type="helix" evidence="17">
    <location>
        <begin position="132"/>
        <end position="143"/>
    </location>
</feature>
<feature type="strand" evidence="17">
    <location>
        <begin position="146"/>
        <end position="148"/>
    </location>
</feature>
<feature type="helix" evidence="17">
    <location>
        <begin position="149"/>
        <end position="156"/>
    </location>
</feature>
<feature type="strand" evidence="17">
    <location>
        <begin position="167"/>
        <end position="171"/>
    </location>
</feature>
<feature type="helix" evidence="17">
    <location>
        <begin position="185"/>
        <end position="202"/>
    </location>
</feature>
<feature type="strand" evidence="17">
    <location>
        <begin position="207"/>
        <end position="210"/>
    </location>
</feature>
<feature type="turn" evidence="17">
    <location>
        <begin position="219"/>
        <end position="222"/>
    </location>
</feature>
<feature type="helix" evidence="17">
    <location>
        <begin position="223"/>
        <end position="232"/>
    </location>
</feature>
<feature type="helix" evidence="17">
    <location>
        <begin position="233"/>
        <end position="235"/>
    </location>
</feature>
<feature type="strand" evidence="17">
    <location>
        <begin position="238"/>
        <end position="245"/>
    </location>
</feature>
<feature type="helix" evidence="17">
    <location>
        <begin position="252"/>
        <end position="256"/>
    </location>
</feature>
<feature type="helix" evidence="17">
    <location>
        <begin position="259"/>
        <end position="280"/>
    </location>
</feature>
<feature type="strand" evidence="17">
    <location>
        <begin position="287"/>
        <end position="295"/>
    </location>
</feature>
<feature type="helix" evidence="17">
    <location>
        <begin position="300"/>
        <end position="309"/>
    </location>
</feature>
<feature type="strand" evidence="17">
    <location>
        <begin position="312"/>
        <end position="315"/>
    </location>
</feature>
<feature type="helix" evidence="17">
    <location>
        <begin position="325"/>
        <end position="340"/>
    </location>
</feature>
<feature type="turn" evidence="17">
    <location>
        <begin position="341"/>
        <end position="344"/>
    </location>
</feature>
<feature type="strand" evidence="17">
    <location>
        <begin position="345"/>
        <end position="351"/>
    </location>
</feature>
<feature type="strand" evidence="17">
    <location>
        <begin position="353"/>
        <end position="357"/>
    </location>
</feature>
<feature type="strand" evidence="17">
    <location>
        <begin position="359"/>
        <end position="362"/>
    </location>
</feature>
<feature type="strand" evidence="17">
    <location>
        <begin position="364"/>
        <end position="366"/>
    </location>
</feature>
<feature type="strand" evidence="17">
    <location>
        <begin position="369"/>
        <end position="371"/>
    </location>
</feature>
<feature type="helix" evidence="17">
    <location>
        <begin position="375"/>
        <end position="384"/>
    </location>
</feature>
<feature type="strand" evidence="17">
    <location>
        <begin position="387"/>
        <end position="390"/>
    </location>
</feature>
<feature type="strand" evidence="17">
    <location>
        <begin position="393"/>
        <end position="395"/>
    </location>
</feature>
<feature type="strand" evidence="17">
    <location>
        <begin position="405"/>
        <end position="417"/>
    </location>
</feature>
<feature type="turn" evidence="17">
    <location>
        <begin position="418"/>
        <end position="421"/>
    </location>
</feature>
<feature type="strand" evidence="17">
    <location>
        <begin position="422"/>
        <end position="429"/>
    </location>
</feature>
<feature type="strand" evidence="16">
    <location>
        <begin position="432"/>
        <end position="434"/>
    </location>
</feature>
<feature type="strand" evidence="17">
    <location>
        <begin position="436"/>
        <end position="442"/>
    </location>
</feature>
<feature type="strand" evidence="17">
    <location>
        <begin position="450"/>
        <end position="456"/>
    </location>
</feature>
<feature type="strand" evidence="15">
    <location>
        <begin position="464"/>
        <end position="466"/>
    </location>
</feature>
<feature type="strand" evidence="15">
    <location>
        <begin position="469"/>
        <end position="472"/>
    </location>
</feature>
<feature type="strand" evidence="13">
    <location>
        <begin position="475"/>
        <end position="477"/>
    </location>
</feature>
<feature type="strand" evidence="17">
    <location>
        <begin position="484"/>
        <end position="491"/>
    </location>
</feature>
<feature type="strand" evidence="17">
    <location>
        <begin position="495"/>
        <end position="501"/>
    </location>
</feature>
<keyword id="KW-0002">3D-structure</keyword>
<keyword id="KW-0119">Carbohydrate metabolism</keyword>
<keyword id="KW-0963">Cytoplasm</keyword>
<keyword id="KW-0326">Glycosidase</keyword>
<keyword id="KW-0378">Hydrolase</keyword>
<keyword id="KW-1185">Reference proteome</keyword>
<dbReference type="EC" id="3.2.1.55" evidence="2"/>
<dbReference type="EMBL" id="CP000568">
    <property type="protein sequence ID" value="ABN53749.1"/>
    <property type="molecule type" value="Genomic_DNA"/>
</dbReference>
<dbReference type="PDB" id="2C7F">
    <property type="method" value="X-ray"/>
    <property type="resolution" value="2.70 A"/>
    <property type="chains" value="A/B/C/D/E/F=1-503"/>
</dbReference>
<dbReference type="PDB" id="2C8N">
    <property type="method" value="X-ray"/>
    <property type="resolution" value="2.90 A"/>
    <property type="chains" value="A/B/C/D/E/F=1-503"/>
</dbReference>
<dbReference type="PDB" id="5O7Z">
    <property type="method" value="X-ray"/>
    <property type="resolution" value="2.64 A"/>
    <property type="chains" value="A/B/C/D/E/F=2-502"/>
</dbReference>
<dbReference type="PDB" id="5O80">
    <property type="method" value="X-ray"/>
    <property type="resolution" value="2.92 A"/>
    <property type="chains" value="A/B/C/D/E/F=2-502"/>
</dbReference>
<dbReference type="PDB" id="5O81">
    <property type="method" value="X-ray"/>
    <property type="resolution" value="2.50 A"/>
    <property type="chains" value="A/B/C/D/E/F=2-502"/>
</dbReference>
<dbReference type="PDB" id="5O82">
    <property type="method" value="X-ray"/>
    <property type="resolution" value="2.39 A"/>
    <property type="chains" value="A/B/C/D/E/F=2-502"/>
</dbReference>
<dbReference type="PDBsum" id="2C7F"/>
<dbReference type="PDBsum" id="2C8N"/>
<dbReference type="PDBsum" id="5O7Z"/>
<dbReference type="PDBsum" id="5O80"/>
<dbReference type="PDBsum" id="5O81"/>
<dbReference type="PDBsum" id="5O82"/>
<dbReference type="SMR" id="A3DIH0"/>
<dbReference type="STRING" id="203119.Cthe_2548"/>
<dbReference type="CAZy" id="GH51">
    <property type="family name" value="Glycoside Hydrolase Family 51"/>
</dbReference>
<dbReference type="KEGG" id="cth:Cthe_2548"/>
<dbReference type="eggNOG" id="COG3534">
    <property type="taxonomic scope" value="Bacteria"/>
</dbReference>
<dbReference type="HOGENOM" id="CLU_017810_1_1_9"/>
<dbReference type="OrthoDB" id="9758333at2"/>
<dbReference type="BRENDA" id="3.2.1.55">
    <property type="organism ID" value="1530"/>
</dbReference>
<dbReference type="UniPathway" id="UPA00667"/>
<dbReference type="EvolutionaryTrace" id="A3DIH0"/>
<dbReference type="Proteomes" id="UP000002145">
    <property type="component" value="Chromosome"/>
</dbReference>
<dbReference type="GO" id="GO:0005737">
    <property type="term" value="C:cytoplasm"/>
    <property type="evidence" value="ECO:0007669"/>
    <property type="project" value="UniProtKB-SubCell"/>
</dbReference>
<dbReference type="GO" id="GO:0046556">
    <property type="term" value="F:alpha-L-arabinofuranosidase activity"/>
    <property type="evidence" value="ECO:0007669"/>
    <property type="project" value="UniProtKB-EC"/>
</dbReference>
<dbReference type="GO" id="GO:0031222">
    <property type="term" value="P:arabinan catabolic process"/>
    <property type="evidence" value="ECO:0007669"/>
    <property type="project" value="UniProtKB-UniPathway"/>
</dbReference>
<dbReference type="GO" id="GO:0046373">
    <property type="term" value="P:L-arabinose metabolic process"/>
    <property type="evidence" value="ECO:0007669"/>
    <property type="project" value="InterPro"/>
</dbReference>
<dbReference type="Gene3D" id="3.20.20.80">
    <property type="entry name" value="Glycosidases"/>
    <property type="match status" value="1"/>
</dbReference>
<dbReference type="Gene3D" id="2.60.40.1180">
    <property type="entry name" value="Golgi alpha-mannosidase II"/>
    <property type="match status" value="1"/>
</dbReference>
<dbReference type="InterPro" id="IPR010720">
    <property type="entry name" value="Alpha-L-AF_C"/>
</dbReference>
<dbReference type="InterPro" id="IPR013780">
    <property type="entry name" value="Glyco_hydro_b"/>
</dbReference>
<dbReference type="InterPro" id="IPR017853">
    <property type="entry name" value="Glycoside_hydrolase_SF"/>
</dbReference>
<dbReference type="PANTHER" id="PTHR43576:SF3">
    <property type="entry name" value="ALPHA-L-ARABINOFURANOSIDASE C"/>
    <property type="match status" value="1"/>
</dbReference>
<dbReference type="PANTHER" id="PTHR43576">
    <property type="entry name" value="ALPHA-L-ARABINOFURANOSIDASE C-RELATED"/>
    <property type="match status" value="1"/>
</dbReference>
<dbReference type="Pfam" id="PF06964">
    <property type="entry name" value="Alpha-L-AF_C"/>
    <property type="match status" value="1"/>
</dbReference>
<dbReference type="SMART" id="SM00813">
    <property type="entry name" value="Alpha-L-AF_C"/>
    <property type="match status" value="1"/>
</dbReference>
<dbReference type="SUPFAM" id="SSF51445">
    <property type="entry name" value="(Trans)glycosidases"/>
    <property type="match status" value="1"/>
</dbReference>
<dbReference type="SUPFAM" id="SSF51011">
    <property type="entry name" value="Glycosyl hydrolase domain"/>
    <property type="match status" value="1"/>
</dbReference>
<sequence>MKKARMTVDKDYKIAEIDKRIYGSFVEHLGRAVYDGLYQPGNSKSDEDGFRKDVIELVKELNVPIIRYPGGNFVSNYFWEDGVGPVEDRPRRLDLAWKSIEPNQVGINEFAKWCKKVNAEIMMAVNLGTRGISDACNLLEYCNHPGGSKYSDMRIKHGVKEPHNIKVWCLGNEMDGPWQVGHKTMDEYGRIAEETARAMKMIDPSIELVACGSSSKDMPTFPQWEATVLDYAYDYVDYISLHQYYGNKENDTADFLAKSDDLDDFIRSVIATCDYIKAKKRSKKDIYLSFDEWNVWYHSNNEDANIMQNEPWRIAPPLLEDIYTFEDALLVGLMLITLMKHADRIKIACLAQLINVIAPIVTERNGGAAWRQTIFYPFMHASKYGRGIVLQPVINSPLHDTSKHEDVTDIESVAIYNEEKEEVTIFAVNRNIHEDIVLVSDVRGMKDYRLLEHIVLEHQDLKIRNSVNGEEVYPKNSDKSSFDDGILTSMLRRASWNVIRIGK</sequence>
<gene>
    <name type="ordered locus">Cthe_2548</name>
</gene>
<accession>A3DIH0</accession>
<name>IABF_ACET2</name>
<organism>
    <name type="scientific">Acetivibrio thermocellus (strain ATCC 27405 / DSM 1237 / JCM 9322 / NBRC 103400 / NCIMB 10682 / NRRL B-4536 / VPI 7372)</name>
    <name type="common">Clostridium thermocellum</name>
    <dbReference type="NCBI Taxonomy" id="203119"/>
    <lineage>
        <taxon>Bacteria</taxon>
        <taxon>Bacillati</taxon>
        <taxon>Bacillota</taxon>
        <taxon>Clostridia</taxon>
        <taxon>Eubacteriales</taxon>
        <taxon>Oscillospiraceae</taxon>
        <taxon>Acetivibrio</taxon>
    </lineage>
</organism>